<proteinExistence type="inferred from homology"/>
<reference key="1">
    <citation type="submission" date="2006-06" db="EMBL/GenBank/DDBJ databases">
        <title>Complete sequence of Rubrobacter xylanophilus DSM 9941.</title>
        <authorList>
            <consortium name="US DOE Joint Genome Institute"/>
            <person name="Copeland A."/>
            <person name="Lucas S."/>
            <person name="Lapidus A."/>
            <person name="Barry K."/>
            <person name="Detter J.C."/>
            <person name="Glavina del Rio T."/>
            <person name="Hammon N."/>
            <person name="Israni S."/>
            <person name="Dalin E."/>
            <person name="Tice H."/>
            <person name="Pitluck S."/>
            <person name="Munk A.C."/>
            <person name="Brettin T."/>
            <person name="Bruce D."/>
            <person name="Han C."/>
            <person name="Tapia R."/>
            <person name="Gilna P."/>
            <person name="Schmutz J."/>
            <person name="Larimer F."/>
            <person name="Land M."/>
            <person name="Hauser L."/>
            <person name="Kyrpides N."/>
            <person name="Lykidis A."/>
            <person name="da Costa M.S."/>
            <person name="Rainey F.A."/>
            <person name="Empadinhas N."/>
            <person name="Jolivet E."/>
            <person name="Battista J.R."/>
            <person name="Richardson P."/>
        </authorList>
    </citation>
    <scope>NUCLEOTIDE SEQUENCE [LARGE SCALE GENOMIC DNA]</scope>
    <source>
        <strain>DSM 9941 / JCM 11954 / NBRC 16129 / PRD-1</strain>
    </source>
</reference>
<evidence type="ECO:0000255" key="1">
    <source>
        <dbReference type="HAMAP-Rule" id="MF_01576"/>
    </source>
</evidence>
<name>FOLD1_RUBXD</name>
<gene>
    <name evidence="1" type="primary">folD1</name>
    <name type="ordered locus">Rxyl_0827</name>
</gene>
<dbReference type="EC" id="1.5.1.5" evidence="1"/>
<dbReference type="EC" id="3.5.4.9" evidence="1"/>
<dbReference type="EMBL" id="CP000386">
    <property type="protein sequence ID" value="ABG03795.1"/>
    <property type="molecule type" value="Genomic_DNA"/>
</dbReference>
<dbReference type="RefSeq" id="WP_011563813.1">
    <property type="nucleotide sequence ID" value="NC_008148.1"/>
</dbReference>
<dbReference type="SMR" id="Q1AXT3"/>
<dbReference type="STRING" id="266117.Rxyl_0827"/>
<dbReference type="KEGG" id="rxy:Rxyl_0827"/>
<dbReference type="eggNOG" id="COG0190">
    <property type="taxonomic scope" value="Bacteria"/>
</dbReference>
<dbReference type="HOGENOM" id="CLU_034045_2_1_11"/>
<dbReference type="OrthoDB" id="9803580at2"/>
<dbReference type="PhylomeDB" id="Q1AXT3"/>
<dbReference type="UniPathway" id="UPA00193"/>
<dbReference type="Proteomes" id="UP000006637">
    <property type="component" value="Chromosome"/>
</dbReference>
<dbReference type="GO" id="GO:0005829">
    <property type="term" value="C:cytosol"/>
    <property type="evidence" value="ECO:0007669"/>
    <property type="project" value="TreeGrafter"/>
</dbReference>
<dbReference type="GO" id="GO:0004477">
    <property type="term" value="F:methenyltetrahydrofolate cyclohydrolase activity"/>
    <property type="evidence" value="ECO:0007669"/>
    <property type="project" value="UniProtKB-UniRule"/>
</dbReference>
<dbReference type="GO" id="GO:0004488">
    <property type="term" value="F:methylenetetrahydrofolate dehydrogenase (NADP+) activity"/>
    <property type="evidence" value="ECO:0007669"/>
    <property type="project" value="UniProtKB-UniRule"/>
</dbReference>
<dbReference type="GO" id="GO:0000105">
    <property type="term" value="P:L-histidine biosynthetic process"/>
    <property type="evidence" value="ECO:0007669"/>
    <property type="project" value="UniProtKB-KW"/>
</dbReference>
<dbReference type="GO" id="GO:0009086">
    <property type="term" value="P:methionine biosynthetic process"/>
    <property type="evidence" value="ECO:0007669"/>
    <property type="project" value="UniProtKB-KW"/>
</dbReference>
<dbReference type="GO" id="GO:0006164">
    <property type="term" value="P:purine nucleotide biosynthetic process"/>
    <property type="evidence" value="ECO:0007669"/>
    <property type="project" value="UniProtKB-KW"/>
</dbReference>
<dbReference type="GO" id="GO:0035999">
    <property type="term" value="P:tetrahydrofolate interconversion"/>
    <property type="evidence" value="ECO:0007669"/>
    <property type="project" value="UniProtKB-UniRule"/>
</dbReference>
<dbReference type="CDD" id="cd01080">
    <property type="entry name" value="NAD_bind_m-THF_DH_Cyclohyd"/>
    <property type="match status" value="1"/>
</dbReference>
<dbReference type="FunFam" id="3.40.50.720:FF:000094">
    <property type="entry name" value="Bifunctional protein FolD"/>
    <property type="match status" value="1"/>
</dbReference>
<dbReference type="FunFam" id="3.40.50.10860:FF:000005">
    <property type="entry name" value="C-1-tetrahydrofolate synthase, cytoplasmic, putative"/>
    <property type="match status" value="1"/>
</dbReference>
<dbReference type="Gene3D" id="3.40.50.10860">
    <property type="entry name" value="Leucine Dehydrogenase, chain A, domain 1"/>
    <property type="match status" value="1"/>
</dbReference>
<dbReference type="Gene3D" id="3.40.50.720">
    <property type="entry name" value="NAD(P)-binding Rossmann-like Domain"/>
    <property type="match status" value="1"/>
</dbReference>
<dbReference type="HAMAP" id="MF_01576">
    <property type="entry name" value="THF_DHG_CYH"/>
    <property type="match status" value="1"/>
</dbReference>
<dbReference type="InterPro" id="IPR046346">
    <property type="entry name" value="Aminoacid_DH-like_N_sf"/>
</dbReference>
<dbReference type="InterPro" id="IPR036291">
    <property type="entry name" value="NAD(P)-bd_dom_sf"/>
</dbReference>
<dbReference type="InterPro" id="IPR000672">
    <property type="entry name" value="THF_DH/CycHdrlase"/>
</dbReference>
<dbReference type="InterPro" id="IPR020630">
    <property type="entry name" value="THF_DH/CycHdrlase_cat_dom"/>
</dbReference>
<dbReference type="InterPro" id="IPR020867">
    <property type="entry name" value="THF_DH/CycHdrlase_CS"/>
</dbReference>
<dbReference type="InterPro" id="IPR020631">
    <property type="entry name" value="THF_DH/CycHdrlase_NAD-bd_dom"/>
</dbReference>
<dbReference type="NCBIfam" id="NF010783">
    <property type="entry name" value="PRK14186.1"/>
    <property type="match status" value="1"/>
</dbReference>
<dbReference type="PANTHER" id="PTHR48099:SF5">
    <property type="entry name" value="C-1-TETRAHYDROFOLATE SYNTHASE, CYTOPLASMIC"/>
    <property type="match status" value="1"/>
</dbReference>
<dbReference type="PANTHER" id="PTHR48099">
    <property type="entry name" value="C-1-TETRAHYDROFOLATE SYNTHASE, CYTOPLASMIC-RELATED"/>
    <property type="match status" value="1"/>
</dbReference>
<dbReference type="Pfam" id="PF00763">
    <property type="entry name" value="THF_DHG_CYH"/>
    <property type="match status" value="1"/>
</dbReference>
<dbReference type="Pfam" id="PF02882">
    <property type="entry name" value="THF_DHG_CYH_C"/>
    <property type="match status" value="1"/>
</dbReference>
<dbReference type="PRINTS" id="PR00085">
    <property type="entry name" value="THFDHDRGNASE"/>
</dbReference>
<dbReference type="SUPFAM" id="SSF53223">
    <property type="entry name" value="Aminoacid dehydrogenase-like, N-terminal domain"/>
    <property type="match status" value="1"/>
</dbReference>
<dbReference type="SUPFAM" id="SSF51735">
    <property type="entry name" value="NAD(P)-binding Rossmann-fold domains"/>
    <property type="match status" value="1"/>
</dbReference>
<dbReference type="PROSITE" id="PS00766">
    <property type="entry name" value="THF_DHG_CYH_1"/>
    <property type="match status" value="1"/>
</dbReference>
<protein>
    <recommendedName>
        <fullName evidence="1">Bifunctional protein FolD 1</fullName>
    </recommendedName>
    <domain>
        <recommendedName>
            <fullName evidence="1">Methylenetetrahydrofolate dehydrogenase</fullName>
            <ecNumber evidence="1">1.5.1.5</ecNumber>
        </recommendedName>
    </domain>
    <domain>
        <recommendedName>
            <fullName evidence="1">Methenyltetrahydrofolate cyclohydrolase</fullName>
            <ecNumber evidence="1">3.5.4.9</ecNumber>
        </recommendedName>
    </domain>
</protein>
<keyword id="KW-0028">Amino-acid biosynthesis</keyword>
<keyword id="KW-0368">Histidine biosynthesis</keyword>
<keyword id="KW-0378">Hydrolase</keyword>
<keyword id="KW-0486">Methionine biosynthesis</keyword>
<keyword id="KW-0511">Multifunctional enzyme</keyword>
<keyword id="KW-0521">NADP</keyword>
<keyword id="KW-0554">One-carbon metabolism</keyword>
<keyword id="KW-0560">Oxidoreductase</keyword>
<keyword id="KW-0658">Purine biosynthesis</keyword>
<keyword id="KW-1185">Reference proteome</keyword>
<accession>Q1AXT3</accession>
<organism>
    <name type="scientific">Rubrobacter xylanophilus (strain DSM 9941 / JCM 11954 / NBRC 16129 / PRD-1)</name>
    <dbReference type="NCBI Taxonomy" id="266117"/>
    <lineage>
        <taxon>Bacteria</taxon>
        <taxon>Bacillati</taxon>
        <taxon>Actinomycetota</taxon>
        <taxon>Rubrobacteria</taxon>
        <taxon>Rubrobacterales</taxon>
        <taxon>Rubrobacteraceae</taxon>
        <taxon>Rubrobacter</taxon>
    </lineage>
</organism>
<sequence>MARLLDGRSVAAQIRAEVAEGVSELKRRGVPVRLDVILAGEDPASVTYVSNKRRDCAEVGIESRLHAFPADVPQKELLALVERLNGDPEVSGFFIQLPLPGGVDPLPLLSAIDPSKDVDGLSPQSAGRLAVGLPSLLPCTPHGVIQLLRRSGVGLEGREAVVVGRSNLVGKPLALLLLRENATVTVCHSRTRDLAGVTRRAEVLVVAAGRRGMVGAEHVREGAVVVDVGIHRAEDGGLTGDVRQEEVAARAAALTPVPGGVGPMTRAMLLYNTLEAARLREERA</sequence>
<feature type="chain" id="PRO_0000268485" description="Bifunctional protein FolD 1">
    <location>
        <begin position="1"/>
        <end position="284"/>
    </location>
</feature>
<feature type="binding site" evidence="1">
    <location>
        <begin position="164"/>
        <end position="166"/>
    </location>
    <ligand>
        <name>NADP(+)</name>
        <dbReference type="ChEBI" id="CHEBI:58349"/>
    </ligand>
</feature>
<feature type="binding site" evidence="1">
    <location>
        <position position="189"/>
    </location>
    <ligand>
        <name>NADP(+)</name>
        <dbReference type="ChEBI" id="CHEBI:58349"/>
    </ligand>
</feature>
<feature type="binding site" evidence="1">
    <location>
        <position position="230"/>
    </location>
    <ligand>
        <name>NADP(+)</name>
        <dbReference type="ChEBI" id="CHEBI:58349"/>
    </ligand>
</feature>
<comment type="function">
    <text evidence="1">Catalyzes the oxidation of 5,10-methylenetetrahydrofolate to 5,10-methenyltetrahydrofolate and then the hydrolysis of 5,10-methenyltetrahydrofolate to 10-formyltetrahydrofolate.</text>
</comment>
<comment type="catalytic activity">
    <reaction evidence="1">
        <text>(6R)-5,10-methylene-5,6,7,8-tetrahydrofolate + NADP(+) = (6R)-5,10-methenyltetrahydrofolate + NADPH</text>
        <dbReference type="Rhea" id="RHEA:22812"/>
        <dbReference type="ChEBI" id="CHEBI:15636"/>
        <dbReference type="ChEBI" id="CHEBI:57455"/>
        <dbReference type="ChEBI" id="CHEBI:57783"/>
        <dbReference type="ChEBI" id="CHEBI:58349"/>
        <dbReference type="EC" id="1.5.1.5"/>
    </reaction>
</comment>
<comment type="catalytic activity">
    <reaction evidence="1">
        <text>(6R)-5,10-methenyltetrahydrofolate + H2O = (6R)-10-formyltetrahydrofolate + H(+)</text>
        <dbReference type="Rhea" id="RHEA:23700"/>
        <dbReference type="ChEBI" id="CHEBI:15377"/>
        <dbReference type="ChEBI" id="CHEBI:15378"/>
        <dbReference type="ChEBI" id="CHEBI:57455"/>
        <dbReference type="ChEBI" id="CHEBI:195366"/>
        <dbReference type="EC" id="3.5.4.9"/>
    </reaction>
</comment>
<comment type="pathway">
    <text evidence="1">One-carbon metabolism; tetrahydrofolate interconversion.</text>
</comment>
<comment type="subunit">
    <text evidence="1">Homodimer.</text>
</comment>
<comment type="similarity">
    <text evidence="1">Belongs to the tetrahydrofolate dehydrogenase/cyclohydrolase family.</text>
</comment>